<name>BETB_BURMS</name>
<proteinExistence type="inferred from homology"/>
<protein>
    <recommendedName>
        <fullName evidence="1">Betaine aldehyde dehydrogenase</fullName>
        <shortName evidence="1">BADH</shortName>
        <ecNumber evidence="1">1.2.1.8</ecNumber>
    </recommendedName>
</protein>
<comment type="function">
    <text evidence="1">Involved in the biosynthesis of the osmoprotectant glycine betaine. Catalyzes the irreversible oxidation of betaine aldehyde to the corresponding acid.</text>
</comment>
<comment type="catalytic activity">
    <reaction evidence="1">
        <text>betaine aldehyde + NAD(+) + H2O = glycine betaine + NADH + 2 H(+)</text>
        <dbReference type="Rhea" id="RHEA:15305"/>
        <dbReference type="ChEBI" id="CHEBI:15377"/>
        <dbReference type="ChEBI" id="CHEBI:15378"/>
        <dbReference type="ChEBI" id="CHEBI:15710"/>
        <dbReference type="ChEBI" id="CHEBI:17750"/>
        <dbReference type="ChEBI" id="CHEBI:57540"/>
        <dbReference type="ChEBI" id="CHEBI:57945"/>
        <dbReference type="EC" id="1.2.1.8"/>
    </reaction>
    <physiologicalReaction direction="left-to-right" evidence="1">
        <dbReference type="Rhea" id="RHEA:15306"/>
    </physiologicalReaction>
</comment>
<comment type="cofactor">
    <cofactor evidence="1">
        <name>K(+)</name>
        <dbReference type="ChEBI" id="CHEBI:29103"/>
    </cofactor>
    <text evidence="1">Binds 2 potassium ions per subunit.</text>
</comment>
<comment type="pathway">
    <text evidence="1">Amine and polyamine biosynthesis; betaine biosynthesis via choline pathway; betaine from betaine aldehyde: step 1/1.</text>
</comment>
<comment type="subunit">
    <text evidence="1">Dimer of dimers.</text>
</comment>
<comment type="similarity">
    <text evidence="1">Belongs to the aldehyde dehydrogenase family.</text>
</comment>
<gene>
    <name evidence="1" type="primary">betB</name>
    <name type="ordered locus">BMASAVP1_0467</name>
</gene>
<organism>
    <name type="scientific">Burkholderia mallei (strain SAVP1)</name>
    <dbReference type="NCBI Taxonomy" id="320388"/>
    <lineage>
        <taxon>Bacteria</taxon>
        <taxon>Pseudomonadati</taxon>
        <taxon>Pseudomonadota</taxon>
        <taxon>Betaproteobacteria</taxon>
        <taxon>Burkholderiales</taxon>
        <taxon>Burkholderiaceae</taxon>
        <taxon>Burkholderia</taxon>
        <taxon>pseudomallei group</taxon>
    </lineage>
</organism>
<accession>A1UVS4</accession>
<reference key="1">
    <citation type="journal article" date="2010" name="Genome Biol. Evol.">
        <title>Continuing evolution of Burkholderia mallei through genome reduction and large-scale rearrangements.</title>
        <authorList>
            <person name="Losada L."/>
            <person name="Ronning C.M."/>
            <person name="DeShazer D."/>
            <person name="Woods D."/>
            <person name="Fedorova N."/>
            <person name="Kim H.S."/>
            <person name="Shabalina S.A."/>
            <person name="Pearson T.R."/>
            <person name="Brinkac L."/>
            <person name="Tan P."/>
            <person name="Nandi T."/>
            <person name="Crabtree J."/>
            <person name="Badger J."/>
            <person name="Beckstrom-Sternberg S."/>
            <person name="Saqib M."/>
            <person name="Schutzer S.E."/>
            <person name="Keim P."/>
            <person name="Nierman W.C."/>
        </authorList>
    </citation>
    <scope>NUCLEOTIDE SEQUENCE [LARGE SCALE GENOMIC DNA]</scope>
    <source>
        <strain>SAVP1</strain>
    </source>
</reference>
<evidence type="ECO:0000255" key="1">
    <source>
        <dbReference type="HAMAP-Rule" id="MF_00804"/>
    </source>
</evidence>
<feature type="chain" id="PRO_1000047036" description="Betaine aldehyde dehydrogenase">
    <location>
        <begin position="1"/>
        <end position="489"/>
    </location>
</feature>
<feature type="active site" description="Charge relay system" evidence="1">
    <location>
        <position position="162"/>
    </location>
</feature>
<feature type="active site" description="Proton acceptor" evidence="1">
    <location>
        <position position="251"/>
    </location>
</feature>
<feature type="active site" description="Nucleophile" evidence="1">
    <location>
        <position position="285"/>
    </location>
</feature>
<feature type="active site" description="Charge relay system" evidence="1">
    <location>
        <position position="463"/>
    </location>
</feature>
<feature type="binding site" evidence="1">
    <location>
        <position position="26"/>
    </location>
    <ligand>
        <name>K(+)</name>
        <dbReference type="ChEBI" id="CHEBI:29103"/>
        <label>1</label>
    </ligand>
</feature>
<feature type="binding site" evidence="1">
    <location>
        <position position="93"/>
    </location>
    <ligand>
        <name>K(+)</name>
        <dbReference type="ChEBI" id="CHEBI:29103"/>
        <label>1</label>
    </ligand>
</feature>
<feature type="binding site" evidence="1">
    <location>
        <begin position="150"/>
        <end position="152"/>
    </location>
    <ligand>
        <name>NAD(+)</name>
        <dbReference type="ChEBI" id="CHEBI:57540"/>
    </ligand>
</feature>
<feature type="binding site" evidence="1">
    <location>
        <begin position="176"/>
        <end position="179"/>
    </location>
    <ligand>
        <name>NAD(+)</name>
        <dbReference type="ChEBI" id="CHEBI:57540"/>
    </ligand>
</feature>
<feature type="binding site" evidence="1">
    <location>
        <position position="180"/>
    </location>
    <ligand>
        <name>K(+)</name>
        <dbReference type="ChEBI" id="CHEBI:29103"/>
        <label>1</label>
    </ligand>
</feature>
<feature type="binding site" evidence="1">
    <location>
        <begin position="229"/>
        <end position="232"/>
    </location>
    <ligand>
        <name>NAD(+)</name>
        <dbReference type="ChEBI" id="CHEBI:57540"/>
    </ligand>
</feature>
<feature type="binding site" evidence="1">
    <location>
        <position position="245"/>
    </location>
    <ligand>
        <name>K(+)</name>
        <dbReference type="ChEBI" id="CHEBI:29103"/>
        <label>2</label>
    </ligand>
</feature>
<feature type="binding site" evidence="1">
    <location>
        <position position="253"/>
    </location>
    <ligand>
        <name>NAD(+)</name>
        <dbReference type="ChEBI" id="CHEBI:57540"/>
    </ligand>
</feature>
<feature type="binding site" description="covalent" evidence="1">
    <location>
        <position position="285"/>
    </location>
    <ligand>
        <name>NAD(+)</name>
        <dbReference type="ChEBI" id="CHEBI:57540"/>
    </ligand>
</feature>
<feature type="binding site" evidence="1">
    <location>
        <position position="386"/>
    </location>
    <ligand>
        <name>NAD(+)</name>
        <dbReference type="ChEBI" id="CHEBI:57540"/>
    </ligand>
</feature>
<feature type="binding site" evidence="1">
    <location>
        <position position="456"/>
    </location>
    <ligand>
        <name>K(+)</name>
        <dbReference type="ChEBI" id="CHEBI:29103"/>
        <label>2</label>
    </ligand>
</feature>
<feature type="binding site" evidence="1">
    <location>
        <position position="459"/>
    </location>
    <ligand>
        <name>K(+)</name>
        <dbReference type="ChEBI" id="CHEBI:29103"/>
        <label>2</label>
    </ligand>
</feature>
<feature type="site" description="Seems to be a necessary countercharge to the potassium cations" evidence="1">
    <location>
        <position position="247"/>
    </location>
</feature>
<feature type="modified residue" description="Cysteine sulfenic acid (-SOH)" evidence="1">
    <location>
        <position position="285"/>
    </location>
</feature>
<sequence>MSVYGLQRLYIAGAHADATSGKTFDTFDPATGELLARVQQASADDVDRAVASAREGQREWAAMTAMQRSRILRRAVELLRERNDALAELEMRDTGKPIAETRAVDIVTGADVIEYYAGLATAIEGLQVPLRPESFVYTRREPLGVCAGIGAWNYPIQIACWKSAPALAAGNAMIFKPSEVTPLSALKLAEIYTEAGVPAGVFNVVQGDGSVGALLSAHPGIAKVSFTGGVETGKKVMSLAGASSLKEVTMELGGKSPLIVFDDADLDRAADIAVTANFFSAGQVCTNGTRVFVQQAVKDAFVERVLARVARIRAGKPSDPDTNFGPLASAAQLDKVLGYIDSGKAEGAKLLAGGARLVNDHFASGQYVAPTVFGDCRDDMRIVREEIFGPVMSILSFETEDEAIARANATDYGLAAGVVTENLSRAHRAIHRLEAGICWINTWGESPAEMPVGGYKQSGVGRENGITTLEHYTRIKSVQVELGRYQPVF</sequence>
<keyword id="KW-0479">Metal-binding</keyword>
<keyword id="KW-0520">NAD</keyword>
<keyword id="KW-0521">NADP</keyword>
<keyword id="KW-0558">Oxidation</keyword>
<keyword id="KW-0560">Oxidoreductase</keyword>
<keyword id="KW-0630">Potassium</keyword>
<dbReference type="EC" id="1.2.1.8" evidence="1"/>
<dbReference type="EMBL" id="CP000525">
    <property type="protein sequence ID" value="ABM48740.1"/>
    <property type="molecule type" value="Genomic_DNA"/>
</dbReference>
<dbReference type="RefSeq" id="WP_004187839.1">
    <property type="nucleotide sequence ID" value="NC_008784.1"/>
</dbReference>
<dbReference type="SMR" id="A1UVS4"/>
<dbReference type="GeneID" id="92976421"/>
<dbReference type="KEGG" id="bmv:BMASAVP1_0467"/>
<dbReference type="HOGENOM" id="CLU_005391_0_0_4"/>
<dbReference type="UniPathway" id="UPA00529">
    <property type="reaction ID" value="UER00386"/>
</dbReference>
<dbReference type="GO" id="GO:0008802">
    <property type="term" value="F:betaine-aldehyde dehydrogenase (NAD+) activity"/>
    <property type="evidence" value="ECO:0007669"/>
    <property type="project" value="UniProtKB-UniRule"/>
</dbReference>
<dbReference type="GO" id="GO:0046872">
    <property type="term" value="F:metal ion binding"/>
    <property type="evidence" value="ECO:0007669"/>
    <property type="project" value="UniProtKB-KW"/>
</dbReference>
<dbReference type="GO" id="GO:0019285">
    <property type="term" value="P:glycine betaine biosynthetic process from choline"/>
    <property type="evidence" value="ECO:0007669"/>
    <property type="project" value="UniProtKB-UniRule"/>
</dbReference>
<dbReference type="CDD" id="cd07090">
    <property type="entry name" value="ALDH_F9_TMBADH"/>
    <property type="match status" value="1"/>
</dbReference>
<dbReference type="FunFam" id="3.40.309.10:FF:000014">
    <property type="entry name" value="NAD/NADP-dependent betaine aldehyde dehydrogenase"/>
    <property type="match status" value="1"/>
</dbReference>
<dbReference type="FunFam" id="3.40.605.10:FF:000007">
    <property type="entry name" value="NAD/NADP-dependent betaine aldehyde dehydrogenase"/>
    <property type="match status" value="1"/>
</dbReference>
<dbReference type="Gene3D" id="3.40.605.10">
    <property type="entry name" value="Aldehyde Dehydrogenase, Chain A, domain 1"/>
    <property type="match status" value="1"/>
</dbReference>
<dbReference type="Gene3D" id="3.40.309.10">
    <property type="entry name" value="Aldehyde Dehydrogenase, Chain A, domain 2"/>
    <property type="match status" value="1"/>
</dbReference>
<dbReference type="HAMAP" id="MF_00804">
    <property type="entry name" value="BADH"/>
    <property type="match status" value="1"/>
</dbReference>
<dbReference type="InterPro" id="IPR016161">
    <property type="entry name" value="Ald_DH/histidinol_DH"/>
</dbReference>
<dbReference type="InterPro" id="IPR016163">
    <property type="entry name" value="Ald_DH_C"/>
</dbReference>
<dbReference type="InterPro" id="IPR016160">
    <property type="entry name" value="Ald_DH_CS_CYS"/>
</dbReference>
<dbReference type="InterPro" id="IPR029510">
    <property type="entry name" value="Ald_DH_CS_GLU"/>
</dbReference>
<dbReference type="InterPro" id="IPR016162">
    <property type="entry name" value="Ald_DH_N"/>
</dbReference>
<dbReference type="InterPro" id="IPR015590">
    <property type="entry name" value="Aldehyde_DH_dom"/>
</dbReference>
<dbReference type="InterPro" id="IPR011264">
    <property type="entry name" value="BADH"/>
</dbReference>
<dbReference type="NCBIfam" id="TIGR01804">
    <property type="entry name" value="BADH"/>
    <property type="match status" value="1"/>
</dbReference>
<dbReference type="NCBIfam" id="NF009725">
    <property type="entry name" value="PRK13252.1"/>
    <property type="match status" value="1"/>
</dbReference>
<dbReference type="PANTHER" id="PTHR11699">
    <property type="entry name" value="ALDEHYDE DEHYDROGENASE-RELATED"/>
    <property type="match status" value="1"/>
</dbReference>
<dbReference type="Pfam" id="PF00171">
    <property type="entry name" value="Aldedh"/>
    <property type="match status" value="1"/>
</dbReference>
<dbReference type="SUPFAM" id="SSF53720">
    <property type="entry name" value="ALDH-like"/>
    <property type="match status" value="1"/>
</dbReference>
<dbReference type="PROSITE" id="PS00070">
    <property type="entry name" value="ALDEHYDE_DEHYDR_CYS"/>
    <property type="match status" value="1"/>
</dbReference>
<dbReference type="PROSITE" id="PS00687">
    <property type="entry name" value="ALDEHYDE_DEHYDR_GLU"/>
    <property type="match status" value="1"/>
</dbReference>